<feature type="chain" id="PRO_0000456778" description="Myo-inositol transporter 1">
    <location>
        <begin position="1"/>
        <end position="567"/>
    </location>
</feature>
<feature type="topological domain" description="Cytoplasmic" evidence="8">
    <location>
        <begin position="1"/>
        <end position="88"/>
    </location>
</feature>
<feature type="transmembrane region" description="Helical; Name=1" evidence="2">
    <location>
        <begin position="89"/>
        <end position="109"/>
    </location>
</feature>
<feature type="topological domain" description="Extracellular" evidence="8">
    <location>
        <begin position="110"/>
        <end position="123"/>
    </location>
</feature>
<feature type="transmembrane region" description="Helical; Name=2" evidence="2">
    <location>
        <begin position="124"/>
        <end position="144"/>
    </location>
</feature>
<feature type="topological domain" description="Cytoplasmic" evidence="8">
    <location>
        <begin position="145"/>
        <end position="150"/>
    </location>
</feature>
<feature type="transmembrane region" description="Helical; Name=3" evidence="2">
    <location>
        <begin position="151"/>
        <end position="171"/>
    </location>
</feature>
<feature type="topological domain" description="Extracellular" evidence="8">
    <location>
        <begin position="172"/>
        <end position="180"/>
    </location>
</feature>
<feature type="transmembrane region" description="Helical; Name=4" evidence="2">
    <location>
        <begin position="181"/>
        <end position="201"/>
    </location>
</feature>
<feature type="topological domain" description="Cytoplasmic" evidence="8">
    <location>
        <begin position="202"/>
        <end position="209"/>
    </location>
</feature>
<feature type="transmembrane region" description="Helical; Name=5" evidence="2">
    <location>
        <begin position="210"/>
        <end position="230"/>
    </location>
</feature>
<feature type="topological domain" description="Extracellular" evidence="8">
    <location>
        <begin position="231"/>
        <end position="240"/>
    </location>
</feature>
<feature type="transmembrane region" description="Helical; Name=6" evidence="2">
    <location>
        <begin position="241"/>
        <end position="261"/>
    </location>
</feature>
<feature type="topological domain" description="Cytoplasmic" evidence="8">
    <location>
        <begin position="262"/>
        <end position="343"/>
    </location>
</feature>
<feature type="transmembrane region" description="Helical; Name=7" evidence="2">
    <location>
        <begin position="344"/>
        <end position="364"/>
    </location>
</feature>
<feature type="topological domain" description="Extracellular" evidence="8">
    <location>
        <begin position="365"/>
        <end position="367"/>
    </location>
</feature>
<feature type="transmembrane region" description="Helical; Name=8" evidence="2">
    <location>
        <begin position="368"/>
        <end position="388"/>
    </location>
</feature>
<feature type="topological domain" description="Cytoplasmic" evidence="8">
    <location>
        <begin position="389"/>
        <end position="397"/>
    </location>
</feature>
<feature type="transmembrane region" description="Helical; Name=9" evidence="2">
    <location>
        <begin position="398"/>
        <end position="418"/>
    </location>
</feature>
<feature type="topological domain" description="Extracellular" evidence="8">
    <location>
        <begin position="419"/>
        <end position="435"/>
    </location>
</feature>
<feature type="transmembrane region" description="Helical; Name=10" evidence="2">
    <location>
        <begin position="436"/>
        <end position="456"/>
    </location>
</feature>
<feature type="topological domain" description="Cytoplasmic" evidence="8">
    <location>
        <begin position="457"/>
        <end position="476"/>
    </location>
</feature>
<feature type="transmembrane region" description="Helical; Name=11" evidence="2">
    <location>
        <begin position="477"/>
        <end position="497"/>
    </location>
</feature>
<feature type="topological domain" description="Extracellular" evidence="8">
    <location>
        <begin position="498"/>
        <end position="503"/>
    </location>
</feature>
<feature type="transmembrane region" description="Helical; Name=12" evidence="2">
    <location>
        <begin position="504"/>
        <end position="524"/>
    </location>
</feature>
<feature type="topological domain" description="Cytoplasmic" evidence="8">
    <location>
        <begin position="525"/>
        <end position="567"/>
    </location>
</feature>
<feature type="region of interest" description="Disordered" evidence="4">
    <location>
        <begin position="14"/>
        <end position="42"/>
    </location>
</feature>
<feature type="compositionally biased region" description="Polar residues" evidence="4">
    <location>
        <begin position="16"/>
        <end position="33"/>
    </location>
</feature>
<feature type="glycosylation site" description="N-linked (GlcNAc...) asparagine" evidence="3">
    <location>
        <position position="365"/>
    </location>
</feature>
<gene>
    <name evidence="7" type="primary">ITR1</name>
    <name evidence="9" type="ORF">CNAG_00097</name>
</gene>
<name>ITR1_CRYNH</name>
<reference evidence="10" key="1">
    <citation type="journal article" date="2014" name="PLoS Genet.">
        <title>Analysis of the genome and transcriptome of Cryptococcus neoformans var. grubii reveals complex RNA expression and microevolution leading to virulence attenuation.</title>
        <authorList>
            <person name="Janbon G."/>
            <person name="Ormerod K.L."/>
            <person name="Paulet D."/>
            <person name="Byrnes E.J. III"/>
            <person name="Yadav V."/>
            <person name="Chatterjee G."/>
            <person name="Mullapudi N."/>
            <person name="Hon C.-C."/>
            <person name="Billmyre R.B."/>
            <person name="Brunel F."/>
            <person name="Bahn Y.-S."/>
            <person name="Chen W."/>
            <person name="Chen Y."/>
            <person name="Chow E.W.L."/>
            <person name="Coppee J.-Y."/>
            <person name="Floyd-Averette A."/>
            <person name="Gaillardin C."/>
            <person name="Gerik K.J."/>
            <person name="Goldberg J."/>
            <person name="Gonzalez-Hilarion S."/>
            <person name="Gujja S."/>
            <person name="Hamlin J.L."/>
            <person name="Hsueh Y.-P."/>
            <person name="Ianiri G."/>
            <person name="Jones S."/>
            <person name="Kodira C.D."/>
            <person name="Kozubowski L."/>
            <person name="Lam W."/>
            <person name="Marra M."/>
            <person name="Mesner L.D."/>
            <person name="Mieczkowski P.A."/>
            <person name="Moyrand F."/>
            <person name="Nielsen K."/>
            <person name="Proux C."/>
            <person name="Rossignol T."/>
            <person name="Schein J.E."/>
            <person name="Sun S."/>
            <person name="Wollschlaeger C."/>
            <person name="Wood I.A."/>
            <person name="Zeng Q."/>
            <person name="Neuveglise C."/>
            <person name="Newlon C.S."/>
            <person name="Perfect J.R."/>
            <person name="Lodge J.K."/>
            <person name="Idnurm A."/>
            <person name="Stajich J.E."/>
            <person name="Kronstad J.W."/>
            <person name="Sanyal K."/>
            <person name="Heitman J."/>
            <person name="Fraser J.A."/>
            <person name="Cuomo C.A."/>
            <person name="Dietrich F.S."/>
        </authorList>
    </citation>
    <scope>NUCLEOTIDE SEQUENCE [LARGE SCALE GENOMIC DNA]</scope>
    <source>
        <strain>H99 / ATCC 208821 / CBS 10515 / FGSC 9487</strain>
    </source>
</reference>
<reference evidence="8" key="2">
    <citation type="journal article" date="2010" name="MBio">
        <title>Role of an expanded inositol transporter repertoire in Cryptococcus neoformans sexual reproduction and virulence.</title>
        <authorList>
            <person name="Xue C."/>
            <person name="Liu T."/>
            <person name="Chen L."/>
            <person name="Li W."/>
            <person name="Liu I."/>
            <person name="Kronstad J.W."/>
            <person name="Seyfang A."/>
            <person name="Heitman J."/>
        </authorList>
    </citation>
    <scope>FUNCTION</scope>
    <scope>INDUCTION</scope>
    <scope>DISRUPTION PHENOTYPE</scope>
</reference>
<reference evidence="8" key="3">
    <citation type="journal article" date="2011" name="Eukaryot. Cell">
        <title>Two major inositol transporters and their role in cryptococcal virulence.</title>
        <authorList>
            <person name="Wang Y."/>
            <person name="Liu T.B."/>
            <person name="Delmas G."/>
            <person name="Park S."/>
            <person name="Perlin D."/>
            <person name="Xue C."/>
        </authorList>
    </citation>
    <scope>INDUCTION</scope>
</reference>
<dbReference type="EMBL" id="CP003820">
    <property type="protein sequence ID" value="AFR92234.1"/>
    <property type="molecule type" value="Genomic_DNA"/>
</dbReference>
<dbReference type="RefSeq" id="XP_012046526.1">
    <property type="nucleotide sequence ID" value="XM_012191136.1"/>
</dbReference>
<dbReference type="SMR" id="J9VHZ4"/>
<dbReference type="GeneID" id="23883965"/>
<dbReference type="KEGG" id="cng:CNAG_00097"/>
<dbReference type="VEuPathDB" id="FungiDB:CNAG_00097"/>
<dbReference type="HOGENOM" id="CLU_001265_30_5_1"/>
<dbReference type="OrthoDB" id="4760at5206"/>
<dbReference type="Proteomes" id="UP000010091">
    <property type="component" value="Chromosome 1"/>
</dbReference>
<dbReference type="GO" id="GO:0005886">
    <property type="term" value="C:plasma membrane"/>
    <property type="evidence" value="ECO:0007669"/>
    <property type="project" value="UniProtKB-SubCell"/>
</dbReference>
<dbReference type="GO" id="GO:0022857">
    <property type="term" value="F:transmembrane transporter activity"/>
    <property type="evidence" value="ECO:0007669"/>
    <property type="project" value="InterPro"/>
</dbReference>
<dbReference type="GO" id="GO:0015798">
    <property type="term" value="P:myo-inositol transport"/>
    <property type="evidence" value="ECO:0007669"/>
    <property type="project" value="UniProtKB-ARBA"/>
</dbReference>
<dbReference type="GO" id="GO:0015791">
    <property type="term" value="P:polyol transmembrane transport"/>
    <property type="evidence" value="ECO:0007669"/>
    <property type="project" value="UniProtKB-ARBA"/>
</dbReference>
<dbReference type="FunFam" id="1.20.1250.20:FF:000073">
    <property type="entry name" value="MFS myo-inositol transporter, putative"/>
    <property type="match status" value="1"/>
</dbReference>
<dbReference type="Gene3D" id="1.20.1250.20">
    <property type="entry name" value="MFS general substrate transporter like domains"/>
    <property type="match status" value="1"/>
</dbReference>
<dbReference type="InterPro" id="IPR020846">
    <property type="entry name" value="MFS_dom"/>
</dbReference>
<dbReference type="InterPro" id="IPR005828">
    <property type="entry name" value="MFS_sugar_transport-like"/>
</dbReference>
<dbReference type="InterPro" id="IPR036259">
    <property type="entry name" value="MFS_trans_sf"/>
</dbReference>
<dbReference type="InterPro" id="IPR050814">
    <property type="entry name" value="Myo-inositol_Transporter"/>
</dbReference>
<dbReference type="InterPro" id="IPR003663">
    <property type="entry name" value="Sugar/inositol_transpt"/>
</dbReference>
<dbReference type="InterPro" id="IPR005829">
    <property type="entry name" value="Sugar_transporter_CS"/>
</dbReference>
<dbReference type="NCBIfam" id="TIGR00879">
    <property type="entry name" value="SP"/>
    <property type="match status" value="1"/>
</dbReference>
<dbReference type="PANTHER" id="PTHR48020">
    <property type="entry name" value="PROTON MYO-INOSITOL COTRANSPORTER"/>
    <property type="match status" value="1"/>
</dbReference>
<dbReference type="PANTHER" id="PTHR48020:SF12">
    <property type="entry name" value="PROTON MYO-INOSITOL COTRANSPORTER"/>
    <property type="match status" value="1"/>
</dbReference>
<dbReference type="Pfam" id="PF00083">
    <property type="entry name" value="Sugar_tr"/>
    <property type="match status" value="1"/>
</dbReference>
<dbReference type="PRINTS" id="PR00171">
    <property type="entry name" value="SUGRTRNSPORT"/>
</dbReference>
<dbReference type="SUPFAM" id="SSF103473">
    <property type="entry name" value="MFS general substrate transporter"/>
    <property type="match status" value="1"/>
</dbReference>
<dbReference type="PROSITE" id="PS50850">
    <property type="entry name" value="MFS"/>
    <property type="match status" value="1"/>
</dbReference>
<dbReference type="PROSITE" id="PS00216">
    <property type="entry name" value="SUGAR_TRANSPORT_1"/>
    <property type="match status" value="1"/>
</dbReference>
<dbReference type="PROSITE" id="PS00217">
    <property type="entry name" value="SUGAR_TRANSPORT_2"/>
    <property type="match status" value="1"/>
</dbReference>
<comment type="function">
    <text evidence="5">May function as a transporter or as a sensor for myo-inositol.</text>
</comment>
<comment type="catalytic activity">
    <reaction evidence="1">
        <text>myo-inositol(out) + H(+)(out) = myo-inositol(in) + H(+)(in)</text>
        <dbReference type="Rhea" id="RHEA:60364"/>
        <dbReference type="ChEBI" id="CHEBI:15378"/>
        <dbReference type="ChEBI" id="CHEBI:17268"/>
    </reaction>
</comment>
<comment type="subcellular location">
    <subcellularLocation>
        <location evidence="1">Cell membrane</location>
        <topology evidence="2">Multi-pass membrane protein</topology>
    </subcellularLocation>
</comment>
<comment type="induction">
    <text evidence="5 6">Induced during sexual reproduction (PubMed:20689743). Expressed during infection of host (PubMed:21398509).</text>
</comment>
<comment type="disruption phenotype">
    <text evidence="5">Increases RNA level of ITR3, ITR3B, and ITR3C (PubMed:20689743). Reduces mating hyphae production; conjugation appears normal (PubMed:20689743). Simultaneous disruption of INO1 leads to an exacerbated mating and sporulation defect, and attenuates virulence in a murine inhalation model of systemic infection (PubMed:20689743).</text>
</comment>
<comment type="similarity">
    <text evidence="8">Belongs to the major facilitator superfamily. Sugar transporter (TC 2.A.1.1) family.</text>
</comment>
<protein>
    <recommendedName>
        <fullName evidence="7">Myo-inositol transporter 1</fullName>
    </recommendedName>
</protein>
<accession>J9VHZ4</accession>
<keyword id="KW-1003">Cell membrane</keyword>
<keyword id="KW-0325">Glycoprotein</keyword>
<keyword id="KW-0472">Membrane</keyword>
<keyword id="KW-0812">Transmembrane</keyword>
<keyword id="KW-1133">Transmembrane helix</keyword>
<keyword id="KW-0813">Transport</keyword>
<organism evidence="10">
    <name type="scientific">Cryptococcus neoformans var. grubii serotype A (strain H99 / ATCC 208821 / CBS 10515 / FGSC 9487)</name>
    <name type="common">Filobasidiella neoformans var. grubii</name>
    <dbReference type="NCBI Taxonomy" id="235443"/>
    <lineage>
        <taxon>Eukaryota</taxon>
        <taxon>Fungi</taxon>
        <taxon>Dikarya</taxon>
        <taxon>Basidiomycota</taxon>
        <taxon>Agaricomycotina</taxon>
        <taxon>Tremellomycetes</taxon>
        <taxon>Tremellales</taxon>
        <taxon>Cryptococcaceae</taxon>
        <taxon>Cryptococcus</taxon>
        <taxon>Cryptococcus neoformans species complex</taxon>
    </lineage>
</organism>
<sequence length="567" mass="60983">MSARPAQPNIYAPIRTSLSGYPSPTHSGSSTPASLEFSDGRLPENNVERDMSKVVERVALLGEADEGAVIVEGEDKVTKFVWMLVSAAAISGLLFGYDTAAISGMLVIIKDDLGTILSSWQKEVITSATTLGALLGGLAAGCVSDFTGRRLVIVFANVAFIGGSICQAACHTVAAMIAGRFIVGLGVGLASCIVPLYIGELAPTMIRGRLVTINCVAVTLGQVVAYAIGASFQNVHNGWRWIVGLGAMPSFVQLAAIGFLPESPRILLLRSDVAGARAITAKIYPLATIEQVDRKIEIMKAAVDQSIEYNANSTWFERLKSLVMVGTNRRALIIGCGLQAAQQLCGFNTLMYYSATIFAMLGFNNATAVGLIVATVNVLFTLVALKIVDPVGRRRTMLFTLPIMILALVFAAIFFYYLTLSTNGILIEDHDYPRSLSILVLLSMLLYVAGYATGLGNIPWQQGELFRLEVRGIGTSICTAVNWSCNMLIAGTFLSLMDAATPSGAFGIYAGFCVIGWVFCWMLYPETSGLSLEEVYFVFEEGFGIKKSQQLRKQKLVEAAKLKAIFE</sequence>
<evidence type="ECO:0000250" key="1">
    <source>
        <dbReference type="UniProtKB" id="P30605"/>
    </source>
</evidence>
<evidence type="ECO:0000255" key="2"/>
<evidence type="ECO:0000255" key="3">
    <source>
        <dbReference type="PROSITE-ProRule" id="PRU00498"/>
    </source>
</evidence>
<evidence type="ECO:0000256" key="4">
    <source>
        <dbReference type="SAM" id="MobiDB-lite"/>
    </source>
</evidence>
<evidence type="ECO:0000269" key="5">
    <source>
    </source>
</evidence>
<evidence type="ECO:0000269" key="6">
    <source>
    </source>
</evidence>
<evidence type="ECO:0000303" key="7">
    <source>
    </source>
</evidence>
<evidence type="ECO:0000305" key="8"/>
<evidence type="ECO:0000312" key="9">
    <source>
        <dbReference type="EMBL" id="AFR92234.1"/>
    </source>
</evidence>
<evidence type="ECO:0000312" key="10">
    <source>
        <dbReference type="Proteomes" id="UP000010091"/>
    </source>
</evidence>
<proteinExistence type="evidence at transcript level"/>